<gene>
    <name evidence="1" type="primary">rplW</name>
    <name type="ordered locus">CV_4184</name>
</gene>
<proteinExistence type="inferred from homology"/>
<comment type="function">
    <text evidence="1">One of the early assembly proteins it binds 23S rRNA. One of the proteins that surrounds the polypeptide exit tunnel on the outside of the ribosome. Forms the main docking site for trigger factor binding to the ribosome.</text>
</comment>
<comment type="subunit">
    <text evidence="1">Part of the 50S ribosomal subunit. Contacts protein L29, and trigger factor when it is bound to the ribosome.</text>
</comment>
<comment type="similarity">
    <text evidence="1">Belongs to the universal ribosomal protein uL23 family.</text>
</comment>
<protein>
    <recommendedName>
        <fullName evidence="1">Large ribosomal subunit protein uL23</fullName>
    </recommendedName>
    <alternativeName>
        <fullName evidence="2">50S ribosomal protein L23</fullName>
    </alternativeName>
</protein>
<name>RL23_CHRVO</name>
<evidence type="ECO:0000255" key="1">
    <source>
        <dbReference type="HAMAP-Rule" id="MF_01369"/>
    </source>
</evidence>
<evidence type="ECO:0000305" key="2"/>
<feature type="chain" id="PRO_0000272730" description="Large ribosomal subunit protein uL23">
    <location>
        <begin position="1"/>
        <end position="102"/>
    </location>
</feature>
<dbReference type="EMBL" id="AE016825">
    <property type="protein sequence ID" value="AAQ61844.1"/>
    <property type="molecule type" value="Genomic_DNA"/>
</dbReference>
<dbReference type="RefSeq" id="WP_011137731.1">
    <property type="nucleotide sequence ID" value="NC_005085.1"/>
</dbReference>
<dbReference type="SMR" id="Q7NQF4"/>
<dbReference type="STRING" id="243365.CV_4184"/>
<dbReference type="GeneID" id="66366344"/>
<dbReference type="KEGG" id="cvi:CV_4184"/>
<dbReference type="eggNOG" id="COG0089">
    <property type="taxonomic scope" value="Bacteria"/>
</dbReference>
<dbReference type="HOGENOM" id="CLU_037562_3_1_4"/>
<dbReference type="OrthoDB" id="9793353at2"/>
<dbReference type="Proteomes" id="UP000001424">
    <property type="component" value="Chromosome"/>
</dbReference>
<dbReference type="GO" id="GO:1990904">
    <property type="term" value="C:ribonucleoprotein complex"/>
    <property type="evidence" value="ECO:0007669"/>
    <property type="project" value="UniProtKB-KW"/>
</dbReference>
<dbReference type="GO" id="GO:0005840">
    <property type="term" value="C:ribosome"/>
    <property type="evidence" value="ECO:0007669"/>
    <property type="project" value="UniProtKB-KW"/>
</dbReference>
<dbReference type="GO" id="GO:0019843">
    <property type="term" value="F:rRNA binding"/>
    <property type="evidence" value="ECO:0007669"/>
    <property type="project" value="UniProtKB-UniRule"/>
</dbReference>
<dbReference type="GO" id="GO:0003735">
    <property type="term" value="F:structural constituent of ribosome"/>
    <property type="evidence" value="ECO:0007669"/>
    <property type="project" value="InterPro"/>
</dbReference>
<dbReference type="GO" id="GO:0006412">
    <property type="term" value="P:translation"/>
    <property type="evidence" value="ECO:0007669"/>
    <property type="project" value="UniProtKB-UniRule"/>
</dbReference>
<dbReference type="FunFam" id="3.30.70.330:FF:000001">
    <property type="entry name" value="50S ribosomal protein L23"/>
    <property type="match status" value="1"/>
</dbReference>
<dbReference type="Gene3D" id="3.30.70.330">
    <property type="match status" value="1"/>
</dbReference>
<dbReference type="HAMAP" id="MF_01369_B">
    <property type="entry name" value="Ribosomal_uL23_B"/>
    <property type="match status" value="1"/>
</dbReference>
<dbReference type="InterPro" id="IPR012677">
    <property type="entry name" value="Nucleotide-bd_a/b_plait_sf"/>
</dbReference>
<dbReference type="InterPro" id="IPR013025">
    <property type="entry name" value="Ribosomal_uL23-like"/>
</dbReference>
<dbReference type="InterPro" id="IPR012678">
    <property type="entry name" value="Ribosomal_uL23/eL15/eS24_sf"/>
</dbReference>
<dbReference type="NCBIfam" id="NF004358">
    <property type="entry name" value="PRK05738.1-1"/>
    <property type="match status" value="1"/>
</dbReference>
<dbReference type="NCBIfam" id="NF004359">
    <property type="entry name" value="PRK05738.1-3"/>
    <property type="match status" value="1"/>
</dbReference>
<dbReference type="NCBIfam" id="NF004360">
    <property type="entry name" value="PRK05738.1-5"/>
    <property type="match status" value="1"/>
</dbReference>
<dbReference type="NCBIfam" id="NF004363">
    <property type="entry name" value="PRK05738.2-4"/>
    <property type="match status" value="1"/>
</dbReference>
<dbReference type="NCBIfam" id="NF004366">
    <property type="entry name" value="PRK05738.3-2"/>
    <property type="match status" value="1"/>
</dbReference>
<dbReference type="PANTHER" id="PTHR11620">
    <property type="entry name" value="60S RIBOSOMAL PROTEIN L23A"/>
    <property type="match status" value="1"/>
</dbReference>
<dbReference type="Pfam" id="PF00276">
    <property type="entry name" value="Ribosomal_L23"/>
    <property type="match status" value="1"/>
</dbReference>
<dbReference type="SUPFAM" id="SSF54189">
    <property type="entry name" value="Ribosomal proteins S24e, L23 and L15e"/>
    <property type="match status" value="1"/>
</dbReference>
<organism>
    <name type="scientific">Chromobacterium violaceum (strain ATCC 12472 / DSM 30191 / JCM 1249 / CCUG 213 / NBRC 12614 / NCIMB 9131 / NCTC 9757 / MK)</name>
    <dbReference type="NCBI Taxonomy" id="243365"/>
    <lineage>
        <taxon>Bacteria</taxon>
        <taxon>Pseudomonadati</taxon>
        <taxon>Pseudomonadota</taxon>
        <taxon>Betaproteobacteria</taxon>
        <taxon>Neisseriales</taxon>
        <taxon>Chromobacteriaceae</taxon>
        <taxon>Chromobacterium</taxon>
    </lineage>
</organism>
<accession>Q7NQF4</accession>
<sequence>MNQERLLQVILAPIVSEKSTMIAEKNQQVAFRVAKDATKPEIKAAVEMLFNVKVDGVSTVNVKGKVKRFGRTIGRRSDWKKAYVSLVDGQELDLTATPAAAE</sequence>
<reference key="1">
    <citation type="journal article" date="2003" name="Proc. Natl. Acad. Sci. U.S.A.">
        <title>The complete genome sequence of Chromobacterium violaceum reveals remarkable and exploitable bacterial adaptability.</title>
        <authorList>
            <person name="Vasconcelos A.T.R."/>
            <person name="de Almeida D.F."/>
            <person name="Hungria M."/>
            <person name="Guimaraes C.T."/>
            <person name="Antonio R.V."/>
            <person name="Almeida F.C."/>
            <person name="de Almeida L.G.P."/>
            <person name="de Almeida R."/>
            <person name="Alves-Gomes J.A."/>
            <person name="Andrade E.M."/>
            <person name="Araripe J."/>
            <person name="de Araujo M.F.F."/>
            <person name="Astolfi-Filho S."/>
            <person name="Azevedo V."/>
            <person name="Baptista A.J."/>
            <person name="Bataus L.A.M."/>
            <person name="Batista J.S."/>
            <person name="Belo A."/>
            <person name="van den Berg C."/>
            <person name="Bogo M."/>
            <person name="Bonatto S."/>
            <person name="Bordignon J."/>
            <person name="Brigido M.M."/>
            <person name="Brito C.A."/>
            <person name="Brocchi M."/>
            <person name="Burity H.A."/>
            <person name="Camargo A.A."/>
            <person name="Cardoso D.D.P."/>
            <person name="Carneiro N.P."/>
            <person name="Carraro D.M."/>
            <person name="Carvalho C.M.B."/>
            <person name="Cascardo J.C.M."/>
            <person name="Cavada B.S."/>
            <person name="Chueire L.M.O."/>
            <person name="Creczynski-Pasa T.B."/>
            <person name="Cunha-Junior N.C."/>
            <person name="Fagundes N."/>
            <person name="Falcao C.L."/>
            <person name="Fantinatti F."/>
            <person name="Farias I.P."/>
            <person name="Felipe M.S.S."/>
            <person name="Ferrari L.P."/>
            <person name="Ferro J.A."/>
            <person name="Ferro M.I.T."/>
            <person name="Franco G.R."/>
            <person name="Freitas N.S.A."/>
            <person name="Furlan L.R."/>
            <person name="Gazzinelli R.T."/>
            <person name="Gomes E.A."/>
            <person name="Goncalves P.R."/>
            <person name="Grangeiro T.B."/>
            <person name="Grattapaglia D."/>
            <person name="Grisard E.C."/>
            <person name="Hanna E.S."/>
            <person name="Jardim S.N."/>
            <person name="Laurino J."/>
            <person name="Leoi L.C.T."/>
            <person name="Lima L.F.A."/>
            <person name="Loureiro M.F."/>
            <person name="Lyra M.C.C.P."/>
            <person name="Madeira H.M.F."/>
            <person name="Manfio G.P."/>
            <person name="Maranhao A.Q."/>
            <person name="Martins W.S."/>
            <person name="di Mauro S.M.Z."/>
            <person name="de Medeiros S.R.B."/>
            <person name="Meissner R.V."/>
            <person name="Moreira M.A.M."/>
            <person name="Nascimento F.F."/>
            <person name="Nicolas M.F."/>
            <person name="Oliveira J.G."/>
            <person name="Oliveira S.C."/>
            <person name="Paixao R.F.C."/>
            <person name="Parente J.A."/>
            <person name="Pedrosa F.O."/>
            <person name="Pena S.D.J."/>
            <person name="Pereira J.O."/>
            <person name="Pereira M."/>
            <person name="Pinto L.S.R.C."/>
            <person name="Pinto L.S."/>
            <person name="Porto J.I.R."/>
            <person name="Potrich D.P."/>
            <person name="Ramalho-Neto C.E."/>
            <person name="Reis A.M.M."/>
            <person name="Rigo L.U."/>
            <person name="Rondinelli E."/>
            <person name="Santos E.B.P."/>
            <person name="Santos F.R."/>
            <person name="Schneider M.P.C."/>
            <person name="Seuanez H.N."/>
            <person name="Silva A.M.R."/>
            <person name="da Silva A.L.C."/>
            <person name="Silva D.W."/>
            <person name="Silva R."/>
            <person name="Simoes I.C."/>
            <person name="Simon D."/>
            <person name="Soares C.M.A."/>
            <person name="Soares R.B.A."/>
            <person name="Souza E.M."/>
            <person name="Souza K.R.L."/>
            <person name="Souza R.C."/>
            <person name="Steffens M.B.R."/>
            <person name="Steindel M."/>
            <person name="Teixeira S.R."/>
            <person name="Urmenyi T."/>
            <person name="Vettore A."/>
            <person name="Wassem R."/>
            <person name="Zaha A."/>
            <person name="Simpson A.J.G."/>
        </authorList>
    </citation>
    <scope>NUCLEOTIDE SEQUENCE [LARGE SCALE GENOMIC DNA]</scope>
    <source>
        <strain>ATCC 12472 / DSM 30191 / JCM 1249 / CCUG 213 / NBRC 12614 / NCIMB 9131 / NCTC 9757 / MK</strain>
    </source>
</reference>
<keyword id="KW-1185">Reference proteome</keyword>
<keyword id="KW-0687">Ribonucleoprotein</keyword>
<keyword id="KW-0689">Ribosomal protein</keyword>
<keyword id="KW-0694">RNA-binding</keyword>
<keyword id="KW-0699">rRNA-binding</keyword>